<accession>P0C235</accession>
<protein>
    <recommendedName>
        <fullName>Glucagon</fullName>
    </recommendedName>
</protein>
<organism>
    <name type="scientific">Polypterus senegalus</name>
    <name type="common">Senegal bichir</name>
    <dbReference type="NCBI Taxonomy" id="55291"/>
    <lineage>
        <taxon>Eukaryota</taxon>
        <taxon>Metazoa</taxon>
        <taxon>Chordata</taxon>
        <taxon>Craniata</taxon>
        <taxon>Vertebrata</taxon>
        <taxon>Euteleostomi</taxon>
        <taxon>Actinopterygii</taxon>
        <taxon>Polypteriformes</taxon>
        <taxon>Polypteridae</taxon>
        <taxon>Polypterus</taxon>
    </lineage>
</organism>
<sequence length="29" mass="3525">HSQGTFTNDYTKYQDSRRAQDFVQWLMSN</sequence>
<reference key="1">
    <citation type="journal article" date="1998" name="Gen. Comp. Endocrinol.">
        <title>Purification and structural characterization of insulin and glucagon from the bichir Polypterus senegalis (Actinopterygii: Polypteriformes).</title>
        <authorList>
            <person name="Conlon J.M."/>
            <person name="Fan H.-Y."/>
            <person name="Fritzsch B."/>
        </authorList>
    </citation>
    <scope>PROTEIN SEQUENCE</scope>
</reference>
<comment type="function">
    <text>Glucagon plays a key role in glucose metabolism and homeostasis. Regulates blood glucose by increasing gluconeogenesis and decreasing glycolysis.</text>
</comment>
<comment type="subcellular location">
    <subcellularLocation>
        <location>Secreted</location>
    </subcellularLocation>
</comment>
<comment type="induction">
    <text>Produced in the A cells of the islets of Langerhans in response to a drop in blood sugar concentration.</text>
</comment>
<comment type="similarity">
    <text evidence="1">Belongs to the glucagon family.</text>
</comment>
<evidence type="ECO:0000305" key="1"/>
<gene>
    <name type="primary">gcg</name>
</gene>
<feature type="peptide" id="PRO_0000260295" description="Glucagon">
    <location>
        <begin position="1"/>
        <end position="29"/>
    </location>
</feature>
<keyword id="KW-0903">Direct protein sequencing</keyword>
<keyword id="KW-0372">Hormone</keyword>
<keyword id="KW-0964">Secreted</keyword>
<dbReference type="SMR" id="P0C235"/>
<dbReference type="GO" id="GO:0005615">
    <property type="term" value="C:extracellular space"/>
    <property type="evidence" value="ECO:0007669"/>
    <property type="project" value="TreeGrafter"/>
</dbReference>
<dbReference type="GO" id="GO:0031769">
    <property type="term" value="F:glucagon receptor binding"/>
    <property type="evidence" value="ECO:0007669"/>
    <property type="project" value="TreeGrafter"/>
</dbReference>
<dbReference type="GO" id="GO:0005179">
    <property type="term" value="F:hormone activity"/>
    <property type="evidence" value="ECO:0007669"/>
    <property type="project" value="UniProtKB-KW"/>
</dbReference>
<dbReference type="GO" id="GO:0007188">
    <property type="term" value="P:adenylate cyclase-modulating G protein-coupled receptor signaling pathway"/>
    <property type="evidence" value="ECO:0007669"/>
    <property type="project" value="TreeGrafter"/>
</dbReference>
<dbReference type="GO" id="GO:0043066">
    <property type="term" value="P:negative regulation of apoptotic process"/>
    <property type="evidence" value="ECO:0007669"/>
    <property type="project" value="TreeGrafter"/>
</dbReference>
<dbReference type="GO" id="GO:0035774">
    <property type="term" value="P:positive regulation of insulin secretion involved in cellular response to glucose stimulus"/>
    <property type="evidence" value="ECO:0007669"/>
    <property type="project" value="TreeGrafter"/>
</dbReference>
<dbReference type="GO" id="GO:0010737">
    <property type="term" value="P:protein kinase A signaling"/>
    <property type="evidence" value="ECO:0007669"/>
    <property type="project" value="TreeGrafter"/>
</dbReference>
<dbReference type="Gene3D" id="6.10.250.590">
    <property type="match status" value="1"/>
</dbReference>
<dbReference type="InterPro" id="IPR015550">
    <property type="entry name" value="Glucagon"/>
</dbReference>
<dbReference type="InterPro" id="IPR000532">
    <property type="entry name" value="Glucagon_GIP_secretin_VIP"/>
</dbReference>
<dbReference type="PANTHER" id="PTHR11418">
    <property type="entry name" value="GLUCAGON"/>
    <property type="match status" value="1"/>
</dbReference>
<dbReference type="PANTHER" id="PTHR11418:SF0">
    <property type="entry name" value="PRO-GLUCAGON"/>
    <property type="match status" value="1"/>
</dbReference>
<dbReference type="Pfam" id="PF00123">
    <property type="entry name" value="Hormone_2"/>
    <property type="match status" value="1"/>
</dbReference>
<dbReference type="PRINTS" id="PR00275">
    <property type="entry name" value="GLUCAGON"/>
</dbReference>
<dbReference type="SMART" id="SM00070">
    <property type="entry name" value="GLUCA"/>
    <property type="match status" value="1"/>
</dbReference>
<dbReference type="PROSITE" id="PS00260">
    <property type="entry name" value="GLUCAGON"/>
    <property type="match status" value="1"/>
</dbReference>
<proteinExistence type="evidence at protein level"/>
<name>GLUC_POLSE</name>